<organism>
    <name type="scientific">Saccharopolyspora erythraea (strain ATCC 11635 / DSM 40517 / JCM 4748 / NBRC 13426 / NCIMB 8594 / NRRL 2338)</name>
    <dbReference type="NCBI Taxonomy" id="405948"/>
    <lineage>
        <taxon>Bacteria</taxon>
        <taxon>Bacillati</taxon>
        <taxon>Actinomycetota</taxon>
        <taxon>Actinomycetes</taxon>
        <taxon>Pseudonocardiales</taxon>
        <taxon>Pseudonocardiaceae</taxon>
        <taxon>Saccharopolyspora</taxon>
    </lineage>
</organism>
<sequence length="189" mass="20486">MRCPFCRGDDSRVVDSREVEDGQAIRRRRSCSGCGRRFTTIEELVLSVVKRSGVTEPFSREKVVRGVARACQGRPVEEDALQQLAHQVEDTVRSLGVSELPSHEVGLAILGPLRELDEVAYLRFASVYRAFSSVEDFEKEIADLRSLRGAARLPEGPEAAQGGPESKAGNGQAAGSGDPEGVKAEKSSE</sequence>
<dbReference type="EMBL" id="AM420293">
    <property type="protein sequence ID" value="CAM01080.1"/>
    <property type="molecule type" value="Genomic_DNA"/>
</dbReference>
<dbReference type="RefSeq" id="WP_011873464.1">
    <property type="nucleotide sequence ID" value="NC_009142.1"/>
</dbReference>
<dbReference type="SMR" id="A4FAK5"/>
<dbReference type="STRING" id="405948.SACE_1763"/>
<dbReference type="KEGG" id="sen:SACE_1763"/>
<dbReference type="eggNOG" id="COG1327">
    <property type="taxonomic scope" value="Bacteria"/>
</dbReference>
<dbReference type="HOGENOM" id="CLU_108412_1_0_11"/>
<dbReference type="OrthoDB" id="9807461at2"/>
<dbReference type="Proteomes" id="UP000006728">
    <property type="component" value="Chromosome"/>
</dbReference>
<dbReference type="GO" id="GO:0005524">
    <property type="term" value="F:ATP binding"/>
    <property type="evidence" value="ECO:0007669"/>
    <property type="project" value="UniProtKB-KW"/>
</dbReference>
<dbReference type="GO" id="GO:0003677">
    <property type="term" value="F:DNA binding"/>
    <property type="evidence" value="ECO:0007669"/>
    <property type="project" value="UniProtKB-KW"/>
</dbReference>
<dbReference type="GO" id="GO:0008270">
    <property type="term" value="F:zinc ion binding"/>
    <property type="evidence" value="ECO:0007669"/>
    <property type="project" value="UniProtKB-UniRule"/>
</dbReference>
<dbReference type="GO" id="GO:0045892">
    <property type="term" value="P:negative regulation of DNA-templated transcription"/>
    <property type="evidence" value="ECO:0007669"/>
    <property type="project" value="UniProtKB-UniRule"/>
</dbReference>
<dbReference type="HAMAP" id="MF_00440">
    <property type="entry name" value="NrdR"/>
    <property type="match status" value="1"/>
</dbReference>
<dbReference type="InterPro" id="IPR005144">
    <property type="entry name" value="ATP-cone_dom"/>
</dbReference>
<dbReference type="InterPro" id="IPR055173">
    <property type="entry name" value="NrdR-like_N"/>
</dbReference>
<dbReference type="InterPro" id="IPR003796">
    <property type="entry name" value="RNR_NrdR-like"/>
</dbReference>
<dbReference type="NCBIfam" id="TIGR00244">
    <property type="entry name" value="transcriptional regulator NrdR"/>
    <property type="match status" value="1"/>
</dbReference>
<dbReference type="PANTHER" id="PTHR30455">
    <property type="entry name" value="TRANSCRIPTIONAL REPRESSOR NRDR"/>
    <property type="match status" value="1"/>
</dbReference>
<dbReference type="PANTHER" id="PTHR30455:SF2">
    <property type="entry name" value="TRANSCRIPTIONAL REPRESSOR NRDR"/>
    <property type="match status" value="1"/>
</dbReference>
<dbReference type="Pfam" id="PF03477">
    <property type="entry name" value="ATP-cone"/>
    <property type="match status" value="1"/>
</dbReference>
<dbReference type="Pfam" id="PF22811">
    <property type="entry name" value="Zn_ribbon_NrdR"/>
    <property type="match status" value="1"/>
</dbReference>
<dbReference type="PROSITE" id="PS51161">
    <property type="entry name" value="ATP_CONE"/>
    <property type="match status" value="1"/>
</dbReference>
<reference key="1">
    <citation type="journal article" date="2007" name="Nat. Biotechnol.">
        <title>Complete genome sequence of the erythromycin-producing bacterium Saccharopolyspora erythraea NRRL23338.</title>
        <authorList>
            <person name="Oliynyk M."/>
            <person name="Samborskyy M."/>
            <person name="Lester J.B."/>
            <person name="Mironenko T."/>
            <person name="Scott N."/>
            <person name="Dickens S."/>
            <person name="Haydock S.F."/>
            <person name="Leadlay P.F."/>
        </authorList>
    </citation>
    <scope>NUCLEOTIDE SEQUENCE [LARGE SCALE GENOMIC DNA]</scope>
    <source>
        <strain>ATCC 11635 / DSM 40517 / JCM 4748 / NBRC 13426 / NCIMB 8594 / NRRL 2338</strain>
    </source>
</reference>
<gene>
    <name evidence="1" type="primary">nrdR</name>
    <name type="ordered locus">SACE_1763</name>
</gene>
<feature type="chain" id="PRO_1000080816" description="Transcriptional repressor NrdR">
    <location>
        <begin position="1"/>
        <end position="189"/>
    </location>
</feature>
<feature type="domain" description="ATP-cone" evidence="1">
    <location>
        <begin position="46"/>
        <end position="136"/>
    </location>
</feature>
<feature type="zinc finger region" evidence="1">
    <location>
        <begin position="3"/>
        <end position="34"/>
    </location>
</feature>
<feature type="region of interest" description="Disordered" evidence="2">
    <location>
        <begin position="152"/>
        <end position="189"/>
    </location>
</feature>
<feature type="compositionally biased region" description="Basic and acidic residues" evidence="2">
    <location>
        <begin position="180"/>
        <end position="189"/>
    </location>
</feature>
<protein>
    <recommendedName>
        <fullName evidence="1">Transcriptional repressor NrdR</fullName>
    </recommendedName>
</protein>
<accession>A4FAK5</accession>
<comment type="function">
    <text evidence="1">Negatively regulates transcription of bacterial ribonucleotide reductase nrd genes and operons by binding to NrdR-boxes.</text>
</comment>
<comment type="cofactor">
    <cofactor evidence="1">
        <name>Zn(2+)</name>
        <dbReference type="ChEBI" id="CHEBI:29105"/>
    </cofactor>
    <text evidence="1">Binds 1 zinc ion.</text>
</comment>
<comment type="similarity">
    <text evidence="1">Belongs to the NrdR family.</text>
</comment>
<proteinExistence type="inferred from homology"/>
<name>NRDR_SACEN</name>
<evidence type="ECO:0000255" key="1">
    <source>
        <dbReference type="HAMAP-Rule" id="MF_00440"/>
    </source>
</evidence>
<evidence type="ECO:0000256" key="2">
    <source>
        <dbReference type="SAM" id="MobiDB-lite"/>
    </source>
</evidence>
<keyword id="KW-0067">ATP-binding</keyword>
<keyword id="KW-0238">DNA-binding</keyword>
<keyword id="KW-0479">Metal-binding</keyword>
<keyword id="KW-0547">Nucleotide-binding</keyword>
<keyword id="KW-1185">Reference proteome</keyword>
<keyword id="KW-0678">Repressor</keyword>
<keyword id="KW-0804">Transcription</keyword>
<keyword id="KW-0805">Transcription regulation</keyword>
<keyword id="KW-0862">Zinc</keyword>
<keyword id="KW-0863">Zinc-finger</keyword>